<reference key="1">
    <citation type="journal article" date="2003" name="Proc. Natl. Acad. Sci. U.S.A.">
        <title>The complete genome sequence of Mycobacterium bovis.</title>
        <authorList>
            <person name="Garnier T."/>
            <person name="Eiglmeier K."/>
            <person name="Camus J.-C."/>
            <person name="Medina N."/>
            <person name="Mansoor H."/>
            <person name="Pryor M."/>
            <person name="Duthoy S."/>
            <person name="Grondin S."/>
            <person name="Lacroix C."/>
            <person name="Monsempe C."/>
            <person name="Simon S."/>
            <person name="Harris B."/>
            <person name="Atkin R."/>
            <person name="Doggett J."/>
            <person name="Mayes R."/>
            <person name="Keating L."/>
            <person name="Wheeler P.R."/>
            <person name="Parkhill J."/>
            <person name="Barrell B.G."/>
            <person name="Cole S.T."/>
            <person name="Gordon S.V."/>
            <person name="Hewinson R.G."/>
        </authorList>
    </citation>
    <scope>NUCLEOTIDE SEQUENCE [LARGE SCALE GENOMIC DNA]</scope>
    <source>
        <strain>ATCC BAA-935 / AF2122/97</strain>
    </source>
</reference>
<reference key="2">
    <citation type="journal article" date="2017" name="Genome Announc.">
        <title>Updated reference genome sequence and annotation of Mycobacterium bovis AF2122/97.</title>
        <authorList>
            <person name="Malone K.M."/>
            <person name="Farrell D."/>
            <person name="Stuber T.P."/>
            <person name="Schubert O.T."/>
            <person name="Aebersold R."/>
            <person name="Robbe-Austerman S."/>
            <person name="Gordon S.V."/>
        </authorList>
    </citation>
    <scope>NUCLEOTIDE SEQUENCE [LARGE SCALE GENOMIC DNA]</scope>
    <scope>GENOME REANNOTATION</scope>
    <source>
        <strain>ATCC BAA-935 / AF2122/97</strain>
    </source>
</reference>
<proteinExistence type="inferred from homology"/>
<keyword id="KW-1185">Reference proteome</keyword>
<keyword id="KW-0687">Ribonucleoprotein</keyword>
<keyword id="KW-0689">Ribosomal protein</keyword>
<keyword id="KW-0694">RNA-binding</keyword>
<keyword id="KW-0699">rRNA-binding</keyword>
<accession>P66466</accession>
<accession>A0A1R3Y016</accession>
<accession>O86354</accession>
<accession>X2BJZ9</accession>
<dbReference type="EMBL" id="LT708304">
    <property type="protein sequence ID" value="SIU00688.1"/>
    <property type="molecule type" value="Genomic_DNA"/>
</dbReference>
<dbReference type="RefSeq" id="NP_855731.1">
    <property type="nucleotide sequence ID" value="NC_002945.3"/>
</dbReference>
<dbReference type="SMR" id="P66466"/>
<dbReference type="KEGG" id="mbo:BQ2027_MB2081C"/>
<dbReference type="PATRIC" id="fig|233413.5.peg.2288"/>
<dbReference type="Proteomes" id="UP000001419">
    <property type="component" value="Chromosome"/>
</dbReference>
<dbReference type="GO" id="GO:0022627">
    <property type="term" value="C:cytosolic small ribosomal subunit"/>
    <property type="evidence" value="ECO:0007669"/>
    <property type="project" value="TreeGrafter"/>
</dbReference>
<dbReference type="GO" id="GO:0070181">
    <property type="term" value="F:small ribosomal subunit rRNA binding"/>
    <property type="evidence" value="ECO:0007669"/>
    <property type="project" value="TreeGrafter"/>
</dbReference>
<dbReference type="GO" id="GO:0003735">
    <property type="term" value="F:structural constituent of ribosome"/>
    <property type="evidence" value="ECO:0007669"/>
    <property type="project" value="InterPro"/>
</dbReference>
<dbReference type="GO" id="GO:0006412">
    <property type="term" value="P:translation"/>
    <property type="evidence" value="ECO:0007669"/>
    <property type="project" value="UniProtKB-UniRule"/>
</dbReference>
<dbReference type="FunFam" id="4.10.640.10:FF:000016">
    <property type="entry name" value="30S ribosomal protein S18"/>
    <property type="match status" value="1"/>
</dbReference>
<dbReference type="Gene3D" id="4.10.640.10">
    <property type="entry name" value="Ribosomal protein S18"/>
    <property type="match status" value="1"/>
</dbReference>
<dbReference type="HAMAP" id="MF_00270">
    <property type="entry name" value="Ribosomal_bS18"/>
    <property type="match status" value="1"/>
</dbReference>
<dbReference type="InterPro" id="IPR001648">
    <property type="entry name" value="Ribosomal_bS18"/>
</dbReference>
<dbReference type="InterPro" id="IPR018275">
    <property type="entry name" value="Ribosomal_bS18_CS"/>
</dbReference>
<dbReference type="InterPro" id="IPR036870">
    <property type="entry name" value="Ribosomal_bS18_sf"/>
</dbReference>
<dbReference type="NCBIfam" id="TIGR00165">
    <property type="entry name" value="S18"/>
    <property type="match status" value="1"/>
</dbReference>
<dbReference type="PANTHER" id="PTHR13479">
    <property type="entry name" value="30S RIBOSOMAL PROTEIN S18"/>
    <property type="match status" value="1"/>
</dbReference>
<dbReference type="PANTHER" id="PTHR13479:SF40">
    <property type="entry name" value="SMALL RIBOSOMAL SUBUNIT PROTEIN BS18M"/>
    <property type="match status" value="1"/>
</dbReference>
<dbReference type="Pfam" id="PF01084">
    <property type="entry name" value="Ribosomal_S18"/>
    <property type="match status" value="1"/>
</dbReference>
<dbReference type="PRINTS" id="PR00974">
    <property type="entry name" value="RIBOSOMALS18"/>
</dbReference>
<dbReference type="SUPFAM" id="SSF46911">
    <property type="entry name" value="Ribosomal protein S18"/>
    <property type="match status" value="1"/>
</dbReference>
<dbReference type="PROSITE" id="PS00057">
    <property type="entry name" value="RIBOSOMAL_S18"/>
    <property type="match status" value="1"/>
</dbReference>
<comment type="function">
    <text evidence="1">Binds as a heterodimer with protein bS6 to the central domain of the 16S rRNA, where it helps stabilize the platform of the 30S subunit.</text>
</comment>
<comment type="subunit">
    <text evidence="1">Part of the 30S ribosomal subunit. Forms a tight heterodimer with protein bS6.</text>
</comment>
<comment type="similarity">
    <text evidence="2">Belongs to the bacterial ribosomal protein bS18 family.</text>
</comment>
<organism>
    <name type="scientific">Mycobacterium bovis (strain ATCC BAA-935 / AF2122/97)</name>
    <dbReference type="NCBI Taxonomy" id="233413"/>
    <lineage>
        <taxon>Bacteria</taxon>
        <taxon>Bacillati</taxon>
        <taxon>Actinomycetota</taxon>
        <taxon>Actinomycetes</taxon>
        <taxon>Mycobacteriales</taxon>
        <taxon>Mycobacteriaceae</taxon>
        <taxon>Mycobacterium</taxon>
        <taxon>Mycobacterium tuberculosis complex</taxon>
    </lineage>
</organism>
<name>RS182_MYCBO</name>
<feature type="chain" id="PRO_0000111178" description="Small ribosomal subunit protein bS18B">
    <location>
        <begin position="1"/>
        <end position="88"/>
    </location>
</feature>
<gene>
    <name type="primary">rpsR2</name>
    <name type="ordered locus">BQ2027_MB2081C</name>
</gene>
<sequence>MAAKSARKGPTKAKKNLLDSLGVESVDYKDTATLRVFISDRGKIRSRGVTGLTVQQQRQVAQAIKNAREMALLPYPGQDRQRRAALCP</sequence>
<evidence type="ECO:0000255" key="1">
    <source>
        <dbReference type="HAMAP-Rule" id="MF_00270"/>
    </source>
</evidence>
<evidence type="ECO:0000305" key="2"/>
<protein>
    <recommendedName>
        <fullName evidence="1">Small ribosomal subunit protein bS18B</fullName>
    </recommendedName>
    <alternativeName>
        <fullName evidence="2">30S ribosomal protein S18 2</fullName>
    </alternativeName>
</protein>